<feature type="chain" id="PRO_1000078589" description="Aminomethyltransferase">
    <location>
        <begin position="1"/>
        <end position="364"/>
    </location>
</feature>
<sequence>MAQQTPLYEQHTLCGARMVDFHGWMMPLHYGSQLDEHHAVRTDAGMFDVSHMTIVDLHGSRTREFLRYLLANDVAKLTKTGKALYSGMLNASGGVIDDLIVYYFTEDFFRLVVNSATREKDLAWITQHAEPYAIDITVRDDLSLIAVQGPNAQEKAATLFTEEQRNAVEGMKPFFGVQAGDLFIATTGYTGEAGYEIAMPNEKAADFWRALVEAGVKPCGLGARDTLRLEAGMNLYGQEMDEGISPLAANMGWTIAWEPTDRDFIGREALEMQREKGHEQLVGLVMTEKGVLRNELPVRFTDAQGNQQEGIITSGTFSPTLGYSIALARVPAGIGETAIVQIRNREMPVKVTKPVFVRNGKAVA</sequence>
<accession>A9MRH0</accession>
<proteinExistence type="inferred from homology"/>
<evidence type="ECO:0000255" key="1">
    <source>
        <dbReference type="HAMAP-Rule" id="MF_00259"/>
    </source>
</evidence>
<dbReference type="EC" id="2.1.2.10" evidence="1"/>
<dbReference type="EMBL" id="CP000880">
    <property type="protein sequence ID" value="ABX24368.1"/>
    <property type="molecule type" value="Genomic_DNA"/>
</dbReference>
<dbReference type="SMR" id="A9MRH0"/>
<dbReference type="STRING" id="41514.SARI_04596"/>
<dbReference type="KEGG" id="ses:SARI_04596"/>
<dbReference type="HOGENOM" id="CLU_007884_10_2_6"/>
<dbReference type="Proteomes" id="UP000002084">
    <property type="component" value="Chromosome"/>
</dbReference>
<dbReference type="GO" id="GO:0005829">
    <property type="term" value="C:cytosol"/>
    <property type="evidence" value="ECO:0007669"/>
    <property type="project" value="TreeGrafter"/>
</dbReference>
<dbReference type="GO" id="GO:0005960">
    <property type="term" value="C:glycine cleavage complex"/>
    <property type="evidence" value="ECO:0007669"/>
    <property type="project" value="InterPro"/>
</dbReference>
<dbReference type="GO" id="GO:0004047">
    <property type="term" value="F:aminomethyltransferase activity"/>
    <property type="evidence" value="ECO:0007669"/>
    <property type="project" value="UniProtKB-UniRule"/>
</dbReference>
<dbReference type="GO" id="GO:0008483">
    <property type="term" value="F:transaminase activity"/>
    <property type="evidence" value="ECO:0007669"/>
    <property type="project" value="UniProtKB-KW"/>
</dbReference>
<dbReference type="GO" id="GO:0019464">
    <property type="term" value="P:glycine decarboxylation via glycine cleavage system"/>
    <property type="evidence" value="ECO:0007669"/>
    <property type="project" value="UniProtKB-UniRule"/>
</dbReference>
<dbReference type="FunFam" id="2.40.30.110:FF:000001">
    <property type="entry name" value="Aminomethyltransferase"/>
    <property type="match status" value="1"/>
</dbReference>
<dbReference type="FunFam" id="3.30.70.1400:FF:000001">
    <property type="entry name" value="Aminomethyltransferase"/>
    <property type="match status" value="1"/>
</dbReference>
<dbReference type="FunFam" id="4.10.1250.10:FF:000001">
    <property type="entry name" value="Aminomethyltransferase"/>
    <property type="match status" value="1"/>
</dbReference>
<dbReference type="Gene3D" id="2.40.30.110">
    <property type="entry name" value="Aminomethyltransferase beta-barrel domains"/>
    <property type="match status" value="1"/>
</dbReference>
<dbReference type="Gene3D" id="3.30.70.1400">
    <property type="entry name" value="Aminomethyltransferase beta-barrel domains"/>
    <property type="match status" value="1"/>
</dbReference>
<dbReference type="Gene3D" id="4.10.1250.10">
    <property type="entry name" value="Aminomethyltransferase fragment"/>
    <property type="match status" value="1"/>
</dbReference>
<dbReference type="Gene3D" id="3.30.1360.120">
    <property type="entry name" value="Probable tRNA modification gtpase trme, domain 1"/>
    <property type="match status" value="1"/>
</dbReference>
<dbReference type="HAMAP" id="MF_00259">
    <property type="entry name" value="GcvT"/>
    <property type="match status" value="1"/>
</dbReference>
<dbReference type="InterPro" id="IPR006223">
    <property type="entry name" value="GCS_T"/>
</dbReference>
<dbReference type="InterPro" id="IPR022903">
    <property type="entry name" value="GCS_T_bac"/>
</dbReference>
<dbReference type="InterPro" id="IPR013977">
    <property type="entry name" value="GCST_C"/>
</dbReference>
<dbReference type="InterPro" id="IPR006222">
    <property type="entry name" value="GCV_T_N"/>
</dbReference>
<dbReference type="InterPro" id="IPR028896">
    <property type="entry name" value="GcvT/YgfZ/DmdA"/>
</dbReference>
<dbReference type="InterPro" id="IPR029043">
    <property type="entry name" value="GcvT/YgfZ_C"/>
</dbReference>
<dbReference type="InterPro" id="IPR027266">
    <property type="entry name" value="TrmE/GcvT_dom1"/>
</dbReference>
<dbReference type="NCBIfam" id="TIGR00528">
    <property type="entry name" value="gcvT"/>
    <property type="match status" value="1"/>
</dbReference>
<dbReference type="NCBIfam" id="NF001567">
    <property type="entry name" value="PRK00389.1"/>
    <property type="match status" value="1"/>
</dbReference>
<dbReference type="PANTHER" id="PTHR43757">
    <property type="entry name" value="AMINOMETHYLTRANSFERASE"/>
    <property type="match status" value="1"/>
</dbReference>
<dbReference type="PANTHER" id="PTHR43757:SF2">
    <property type="entry name" value="AMINOMETHYLTRANSFERASE, MITOCHONDRIAL"/>
    <property type="match status" value="1"/>
</dbReference>
<dbReference type="Pfam" id="PF01571">
    <property type="entry name" value="GCV_T"/>
    <property type="match status" value="1"/>
</dbReference>
<dbReference type="Pfam" id="PF08669">
    <property type="entry name" value="GCV_T_C"/>
    <property type="match status" value="1"/>
</dbReference>
<dbReference type="PIRSF" id="PIRSF006487">
    <property type="entry name" value="GcvT"/>
    <property type="match status" value="1"/>
</dbReference>
<dbReference type="SUPFAM" id="SSF101790">
    <property type="entry name" value="Aminomethyltransferase beta-barrel domain"/>
    <property type="match status" value="1"/>
</dbReference>
<dbReference type="SUPFAM" id="SSF103025">
    <property type="entry name" value="Folate-binding domain"/>
    <property type="match status" value="1"/>
</dbReference>
<comment type="function">
    <text evidence="1">The glycine cleavage system catalyzes the degradation of glycine.</text>
</comment>
<comment type="catalytic activity">
    <reaction evidence="1">
        <text>N(6)-[(R)-S(8)-aminomethyldihydrolipoyl]-L-lysyl-[protein] + (6S)-5,6,7,8-tetrahydrofolate = N(6)-[(R)-dihydrolipoyl]-L-lysyl-[protein] + (6R)-5,10-methylene-5,6,7,8-tetrahydrofolate + NH4(+)</text>
        <dbReference type="Rhea" id="RHEA:16945"/>
        <dbReference type="Rhea" id="RHEA-COMP:10475"/>
        <dbReference type="Rhea" id="RHEA-COMP:10492"/>
        <dbReference type="ChEBI" id="CHEBI:15636"/>
        <dbReference type="ChEBI" id="CHEBI:28938"/>
        <dbReference type="ChEBI" id="CHEBI:57453"/>
        <dbReference type="ChEBI" id="CHEBI:83100"/>
        <dbReference type="ChEBI" id="CHEBI:83143"/>
        <dbReference type="EC" id="2.1.2.10"/>
    </reaction>
</comment>
<comment type="subunit">
    <text evidence="1">The glycine cleavage system is composed of four proteins: P, T, L and H.</text>
</comment>
<comment type="similarity">
    <text evidence="1">Belongs to the GcvT family.</text>
</comment>
<name>GCST_SALAR</name>
<gene>
    <name evidence="1" type="primary">gcvT</name>
    <name type="ordered locus">SARI_04596</name>
</gene>
<keyword id="KW-0032">Aminotransferase</keyword>
<keyword id="KW-1185">Reference proteome</keyword>
<keyword id="KW-0808">Transferase</keyword>
<organism>
    <name type="scientific">Salmonella arizonae (strain ATCC BAA-731 / CDC346-86 / RSK2980)</name>
    <dbReference type="NCBI Taxonomy" id="41514"/>
    <lineage>
        <taxon>Bacteria</taxon>
        <taxon>Pseudomonadati</taxon>
        <taxon>Pseudomonadota</taxon>
        <taxon>Gammaproteobacteria</taxon>
        <taxon>Enterobacterales</taxon>
        <taxon>Enterobacteriaceae</taxon>
        <taxon>Salmonella</taxon>
    </lineage>
</organism>
<protein>
    <recommendedName>
        <fullName evidence="1">Aminomethyltransferase</fullName>
        <ecNumber evidence="1">2.1.2.10</ecNumber>
    </recommendedName>
    <alternativeName>
        <fullName evidence="1">Glycine cleavage system T protein</fullName>
    </alternativeName>
</protein>
<reference key="1">
    <citation type="submission" date="2007-11" db="EMBL/GenBank/DDBJ databases">
        <authorList>
            <consortium name="The Salmonella enterica serovar Arizonae Genome Sequencing Project"/>
            <person name="McClelland M."/>
            <person name="Sanderson E.K."/>
            <person name="Porwollik S."/>
            <person name="Spieth J."/>
            <person name="Clifton W.S."/>
            <person name="Fulton R."/>
            <person name="Chunyan W."/>
            <person name="Wollam A."/>
            <person name="Shah N."/>
            <person name="Pepin K."/>
            <person name="Bhonagiri V."/>
            <person name="Nash W."/>
            <person name="Johnson M."/>
            <person name="Thiruvilangam P."/>
            <person name="Wilson R."/>
        </authorList>
    </citation>
    <scope>NUCLEOTIDE SEQUENCE [LARGE SCALE GENOMIC DNA]</scope>
    <source>
        <strain>ATCC BAA-731 / CDC346-86 / RSK2980</strain>
    </source>
</reference>